<accession>Q72Y10</accession>
<comment type="function">
    <text evidence="1">Catalyzes the attachment of tyrosine to tRNA(Tyr) in a two-step reaction: tyrosine is first activated by ATP to form Tyr-AMP and then transferred to the acceptor end of tRNA(Tyr).</text>
</comment>
<comment type="catalytic activity">
    <reaction evidence="1">
        <text>tRNA(Tyr) + L-tyrosine + ATP = L-tyrosyl-tRNA(Tyr) + AMP + diphosphate + H(+)</text>
        <dbReference type="Rhea" id="RHEA:10220"/>
        <dbReference type="Rhea" id="RHEA-COMP:9706"/>
        <dbReference type="Rhea" id="RHEA-COMP:9707"/>
        <dbReference type="ChEBI" id="CHEBI:15378"/>
        <dbReference type="ChEBI" id="CHEBI:30616"/>
        <dbReference type="ChEBI" id="CHEBI:33019"/>
        <dbReference type="ChEBI" id="CHEBI:58315"/>
        <dbReference type="ChEBI" id="CHEBI:78442"/>
        <dbReference type="ChEBI" id="CHEBI:78536"/>
        <dbReference type="ChEBI" id="CHEBI:456215"/>
        <dbReference type="EC" id="6.1.1.1"/>
    </reaction>
</comment>
<comment type="subunit">
    <text evidence="1">Homodimer.</text>
</comment>
<comment type="subcellular location">
    <subcellularLocation>
        <location evidence="1">Cytoplasm</location>
    </subcellularLocation>
</comment>
<comment type="similarity">
    <text evidence="1">Belongs to the class-I aminoacyl-tRNA synthetase family. TyrS type 1 subfamily.</text>
</comment>
<proteinExistence type="inferred from homology"/>
<gene>
    <name evidence="1" type="primary">tyrS2</name>
    <name type="ordered locus">BCE_5211</name>
</gene>
<protein>
    <recommendedName>
        <fullName evidence="1">Tyrosine--tRNA ligase 2</fullName>
        <ecNumber evidence="1">6.1.1.1</ecNumber>
    </recommendedName>
    <alternativeName>
        <fullName evidence="1">Tyrosyl-tRNA synthetase 2</fullName>
        <shortName evidence="1">TyrRS 2</shortName>
    </alternativeName>
</protein>
<dbReference type="EC" id="6.1.1.1" evidence="1"/>
<dbReference type="EMBL" id="AE017194">
    <property type="protein sequence ID" value="AAS44112.1"/>
    <property type="molecule type" value="Genomic_DNA"/>
</dbReference>
<dbReference type="SMR" id="Q72Y10"/>
<dbReference type="KEGG" id="bca:BCE_5211"/>
<dbReference type="HOGENOM" id="CLU_024003_0_3_9"/>
<dbReference type="Proteomes" id="UP000002527">
    <property type="component" value="Chromosome"/>
</dbReference>
<dbReference type="GO" id="GO:0005829">
    <property type="term" value="C:cytosol"/>
    <property type="evidence" value="ECO:0007669"/>
    <property type="project" value="TreeGrafter"/>
</dbReference>
<dbReference type="GO" id="GO:0005524">
    <property type="term" value="F:ATP binding"/>
    <property type="evidence" value="ECO:0007669"/>
    <property type="project" value="UniProtKB-UniRule"/>
</dbReference>
<dbReference type="GO" id="GO:0003723">
    <property type="term" value="F:RNA binding"/>
    <property type="evidence" value="ECO:0007669"/>
    <property type="project" value="UniProtKB-KW"/>
</dbReference>
<dbReference type="GO" id="GO:0004831">
    <property type="term" value="F:tyrosine-tRNA ligase activity"/>
    <property type="evidence" value="ECO:0007669"/>
    <property type="project" value="UniProtKB-UniRule"/>
</dbReference>
<dbReference type="GO" id="GO:0006437">
    <property type="term" value="P:tyrosyl-tRNA aminoacylation"/>
    <property type="evidence" value="ECO:0007669"/>
    <property type="project" value="UniProtKB-UniRule"/>
</dbReference>
<dbReference type="CDD" id="cd00165">
    <property type="entry name" value="S4"/>
    <property type="match status" value="1"/>
</dbReference>
<dbReference type="CDD" id="cd00805">
    <property type="entry name" value="TyrRS_core"/>
    <property type="match status" value="1"/>
</dbReference>
<dbReference type="FunFam" id="1.10.240.10:FF:000001">
    <property type="entry name" value="Tyrosine--tRNA ligase"/>
    <property type="match status" value="1"/>
</dbReference>
<dbReference type="FunFam" id="3.40.50.620:FF:000008">
    <property type="entry name" value="Tyrosine--tRNA ligase"/>
    <property type="match status" value="1"/>
</dbReference>
<dbReference type="Gene3D" id="3.40.50.620">
    <property type="entry name" value="HUPs"/>
    <property type="match status" value="1"/>
</dbReference>
<dbReference type="Gene3D" id="3.10.290.10">
    <property type="entry name" value="RNA-binding S4 domain"/>
    <property type="match status" value="1"/>
</dbReference>
<dbReference type="Gene3D" id="1.10.240.10">
    <property type="entry name" value="Tyrosyl-Transfer RNA Synthetase"/>
    <property type="match status" value="1"/>
</dbReference>
<dbReference type="HAMAP" id="MF_02006">
    <property type="entry name" value="Tyr_tRNA_synth_type1"/>
    <property type="match status" value="1"/>
</dbReference>
<dbReference type="InterPro" id="IPR001412">
    <property type="entry name" value="aa-tRNA-synth_I_CS"/>
</dbReference>
<dbReference type="InterPro" id="IPR002305">
    <property type="entry name" value="aa-tRNA-synth_Ic"/>
</dbReference>
<dbReference type="InterPro" id="IPR014729">
    <property type="entry name" value="Rossmann-like_a/b/a_fold"/>
</dbReference>
<dbReference type="InterPro" id="IPR002942">
    <property type="entry name" value="S4_RNA-bd"/>
</dbReference>
<dbReference type="InterPro" id="IPR036986">
    <property type="entry name" value="S4_RNA-bd_sf"/>
</dbReference>
<dbReference type="InterPro" id="IPR054608">
    <property type="entry name" value="SYY-like_C"/>
</dbReference>
<dbReference type="InterPro" id="IPR002307">
    <property type="entry name" value="Tyr-tRNA-ligase"/>
</dbReference>
<dbReference type="InterPro" id="IPR024088">
    <property type="entry name" value="Tyr-tRNA-ligase_bac-type"/>
</dbReference>
<dbReference type="InterPro" id="IPR024107">
    <property type="entry name" value="Tyr-tRNA-ligase_bac_1"/>
</dbReference>
<dbReference type="NCBIfam" id="TIGR00234">
    <property type="entry name" value="tyrS"/>
    <property type="match status" value="1"/>
</dbReference>
<dbReference type="PANTHER" id="PTHR11766:SF0">
    <property type="entry name" value="TYROSINE--TRNA LIGASE, MITOCHONDRIAL"/>
    <property type="match status" value="1"/>
</dbReference>
<dbReference type="PANTHER" id="PTHR11766">
    <property type="entry name" value="TYROSYL-TRNA SYNTHETASE"/>
    <property type="match status" value="1"/>
</dbReference>
<dbReference type="Pfam" id="PF22421">
    <property type="entry name" value="SYY_C-terminal"/>
    <property type="match status" value="1"/>
</dbReference>
<dbReference type="Pfam" id="PF00579">
    <property type="entry name" value="tRNA-synt_1b"/>
    <property type="match status" value="1"/>
</dbReference>
<dbReference type="PRINTS" id="PR01040">
    <property type="entry name" value="TRNASYNTHTYR"/>
</dbReference>
<dbReference type="SMART" id="SM00363">
    <property type="entry name" value="S4"/>
    <property type="match status" value="1"/>
</dbReference>
<dbReference type="SUPFAM" id="SSF55174">
    <property type="entry name" value="Alpha-L RNA-binding motif"/>
    <property type="match status" value="1"/>
</dbReference>
<dbReference type="SUPFAM" id="SSF52374">
    <property type="entry name" value="Nucleotidylyl transferase"/>
    <property type="match status" value="1"/>
</dbReference>
<dbReference type="PROSITE" id="PS00178">
    <property type="entry name" value="AA_TRNA_LIGASE_I"/>
    <property type="match status" value="1"/>
</dbReference>
<dbReference type="PROSITE" id="PS50889">
    <property type="entry name" value="S4"/>
    <property type="match status" value="1"/>
</dbReference>
<name>SYY2_BACC1</name>
<keyword id="KW-0030">Aminoacyl-tRNA synthetase</keyword>
<keyword id="KW-0067">ATP-binding</keyword>
<keyword id="KW-0963">Cytoplasm</keyword>
<keyword id="KW-0436">Ligase</keyword>
<keyword id="KW-0547">Nucleotide-binding</keyword>
<keyword id="KW-0648">Protein biosynthesis</keyword>
<keyword id="KW-0694">RNA-binding</keyword>
<organism>
    <name type="scientific">Bacillus cereus (strain ATCC 10987 / NRS 248)</name>
    <dbReference type="NCBI Taxonomy" id="222523"/>
    <lineage>
        <taxon>Bacteria</taxon>
        <taxon>Bacillati</taxon>
        <taxon>Bacillota</taxon>
        <taxon>Bacilli</taxon>
        <taxon>Bacillales</taxon>
        <taxon>Bacillaceae</taxon>
        <taxon>Bacillus</taxon>
        <taxon>Bacillus cereus group</taxon>
    </lineage>
</organism>
<evidence type="ECO:0000255" key="1">
    <source>
        <dbReference type="HAMAP-Rule" id="MF_02006"/>
    </source>
</evidence>
<sequence>MNIIDELEWRGAINQQTDEEGLRKLVEEKKISLYCGVDPTGDSMHIGHLIPFMMMKRFQLAGHHPVILIGGATGTIGDPSGRQSERQLQTLEVVQHNVDALTAQMKKLFDFGGNSEVKMVNNYDWTHEINIIEFLRDYGKNFSINSMLAKDIVASRLDTGISFTEFTYQILQAMDFHHLYTKEDVQLQIGGSDQWGNITSGLDLIRKLEGHEAKVFGLTIPLLLKSDGTKFGKSAGGAVWLDPEKTTPFEFYQFWVNTDDRDVVKYLKYFTFLTKERIDELAVKVETEPHKREAQKVLAEEMTKFVHGEEALLQAVKITEALFSGDIKSLTADEIEQGFKEMPTFQSSKETKNIVEWLVDLGIEPSRRQAREDINNGAISMNGEKVTDVGTDVTVENSFDGRFIIIRKGKKNYSLVKLG</sequence>
<feature type="chain" id="PRO_0000234670" description="Tyrosine--tRNA ligase 2">
    <location>
        <begin position="1"/>
        <end position="419"/>
    </location>
</feature>
<feature type="domain" description="S4 RNA-binding" evidence="1">
    <location>
        <begin position="352"/>
        <end position="418"/>
    </location>
</feature>
<feature type="short sequence motif" description="'HIGH' region">
    <location>
        <begin position="39"/>
        <end position="48"/>
    </location>
</feature>
<feature type="short sequence motif" description="'KMSKS' region">
    <location>
        <begin position="230"/>
        <end position="234"/>
    </location>
</feature>
<feature type="binding site" evidence="1">
    <location>
        <position position="34"/>
    </location>
    <ligand>
        <name>L-tyrosine</name>
        <dbReference type="ChEBI" id="CHEBI:58315"/>
    </ligand>
</feature>
<feature type="binding site" evidence="1">
    <location>
        <position position="168"/>
    </location>
    <ligand>
        <name>L-tyrosine</name>
        <dbReference type="ChEBI" id="CHEBI:58315"/>
    </ligand>
</feature>
<feature type="binding site" evidence="1">
    <location>
        <position position="172"/>
    </location>
    <ligand>
        <name>L-tyrosine</name>
        <dbReference type="ChEBI" id="CHEBI:58315"/>
    </ligand>
</feature>
<feature type="binding site" evidence="1">
    <location>
        <position position="233"/>
    </location>
    <ligand>
        <name>ATP</name>
        <dbReference type="ChEBI" id="CHEBI:30616"/>
    </ligand>
</feature>
<reference key="1">
    <citation type="journal article" date="2004" name="Nucleic Acids Res.">
        <title>The genome sequence of Bacillus cereus ATCC 10987 reveals metabolic adaptations and a large plasmid related to Bacillus anthracis pXO1.</title>
        <authorList>
            <person name="Rasko D.A."/>
            <person name="Ravel J."/>
            <person name="Oekstad O.A."/>
            <person name="Helgason E."/>
            <person name="Cer R.Z."/>
            <person name="Jiang L."/>
            <person name="Shores K.A."/>
            <person name="Fouts D.E."/>
            <person name="Tourasse N.J."/>
            <person name="Angiuoli S.V."/>
            <person name="Kolonay J.F."/>
            <person name="Nelson W.C."/>
            <person name="Kolstoe A.-B."/>
            <person name="Fraser C.M."/>
            <person name="Read T.D."/>
        </authorList>
    </citation>
    <scope>NUCLEOTIDE SEQUENCE [LARGE SCALE GENOMIC DNA]</scope>
    <source>
        <strain>ATCC 10987 / NRS 248</strain>
    </source>
</reference>